<evidence type="ECO:0000250" key="1"/>
<evidence type="ECO:0000250" key="2">
    <source>
        <dbReference type="UniProtKB" id="P00157"/>
    </source>
</evidence>
<evidence type="ECO:0000255" key="3">
    <source>
        <dbReference type="PROSITE-ProRule" id="PRU00967"/>
    </source>
</evidence>
<evidence type="ECO:0000255" key="4">
    <source>
        <dbReference type="PROSITE-ProRule" id="PRU00968"/>
    </source>
</evidence>
<proteinExistence type="inferred from homology"/>
<gene>
    <name type="primary">MT-CYB</name>
    <name type="synonym">COB</name>
    <name type="synonym">CYTB</name>
    <name type="synonym">MTCYB</name>
</gene>
<accession>P38594</accession>
<accession>Q08H98</accession>
<organism>
    <name type="scientific">Leptonychotes weddellii</name>
    <name type="common">Weddell seal</name>
    <name type="synonym">Otaria weddellii</name>
    <dbReference type="NCBI Taxonomy" id="9713"/>
    <lineage>
        <taxon>Eukaryota</taxon>
        <taxon>Metazoa</taxon>
        <taxon>Chordata</taxon>
        <taxon>Craniata</taxon>
        <taxon>Vertebrata</taxon>
        <taxon>Euteleostomi</taxon>
        <taxon>Mammalia</taxon>
        <taxon>Eutheria</taxon>
        <taxon>Laurasiatheria</taxon>
        <taxon>Carnivora</taxon>
        <taxon>Caniformia</taxon>
        <taxon>Pinnipedia</taxon>
        <taxon>Phocidae</taxon>
        <taxon>Monachinae</taxon>
        <taxon>Lobodontini</taxon>
        <taxon>Leptonychotes</taxon>
    </lineage>
</organism>
<name>CYB_LEPWE</name>
<geneLocation type="mitochondrion"/>
<protein>
    <recommendedName>
        <fullName>Cytochrome b</fullName>
    </recommendedName>
    <alternativeName>
        <fullName>Complex III subunit 3</fullName>
    </alternativeName>
    <alternativeName>
        <fullName>Complex III subunit III</fullName>
    </alternativeName>
    <alternativeName>
        <fullName>Cytochrome b-c1 complex subunit 3</fullName>
    </alternativeName>
    <alternativeName>
        <fullName>Ubiquinol-cytochrome-c reductase complex cytochrome b subunit</fullName>
    </alternativeName>
</protein>
<comment type="function">
    <text evidence="2">Component of the ubiquinol-cytochrome c reductase complex (complex III or cytochrome b-c1 complex) that is part of the mitochondrial respiratory chain. The b-c1 complex mediates electron transfer from ubiquinol to cytochrome c. Contributes to the generation of a proton gradient across the mitochondrial membrane that is then used for ATP synthesis.</text>
</comment>
<comment type="cofactor">
    <cofactor evidence="2">
        <name>heme b</name>
        <dbReference type="ChEBI" id="CHEBI:60344"/>
    </cofactor>
    <text evidence="2">Binds 2 heme b groups non-covalently.</text>
</comment>
<comment type="subunit">
    <text evidence="2">The cytochrome bc1 complex contains 11 subunits: 3 respiratory subunits (MT-CYB, CYC1 and UQCRFS1), 2 core proteins (UQCRC1 and UQCRC2) and 6 low-molecular weight proteins (UQCRH/QCR6, UQCRB/QCR7, UQCRQ/QCR8, UQCR10/QCR9, UQCR11/QCR10 and a cleavage product of UQCRFS1). This cytochrome bc1 complex then forms a dimer.</text>
</comment>
<comment type="subcellular location">
    <subcellularLocation>
        <location evidence="2">Mitochondrion inner membrane</location>
        <topology evidence="2">Multi-pass membrane protein</topology>
    </subcellularLocation>
</comment>
<comment type="miscellaneous">
    <text evidence="1">Heme 1 (or BL or b562) is low-potential and absorbs at about 562 nm, and heme 2 (or BH or b566) is high-potential and absorbs at about 566 nm.</text>
</comment>
<comment type="similarity">
    <text evidence="3 4">Belongs to the cytochrome b family.</text>
</comment>
<comment type="caution">
    <text evidence="2">The full-length protein contains only eight transmembrane helices, not nine as predicted by bioinformatics tools.</text>
</comment>
<keyword id="KW-0249">Electron transport</keyword>
<keyword id="KW-0349">Heme</keyword>
<keyword id="KW-0408">Iron</keyword>
<keyword id="KW-0472">Membrane</keyword>
<keyword id="KW-0479">Metal-binding</keyword>
<keyword id="KW-0496">Mitochondrion</keyword>
<keyword id="KW-0999">Mitochondrion inner membrane</keyword>
<keyword id="KW-1185">Reference proteome</keyword>
<keyword id="KW-0679">Respiratory chain</keyword>
<keyword id="KW-0812">Transmembrane</keyword>
<keyword id="KW-1133">Transmembrane helix</keyword>
<keyword id="KW-0813">Transport</keyword>
<keyword id="KW-0830">Ubiquinone</keyword>
<feature type="chain" id="PRO_0000061116" description="Cytochrome b">
    <location>
        <begin position="1"/>
        <end position="379"/>
    </location>
</feature>
<feature type="transmembrane region" description="Helical" evidence="2">
    <location>
        <begin position="33"/>
        <end position="53"/>
    </location>
</feature>
<feature type="transmembrane region" description="Helical" evidence="2">
    <location>
        <begin position="77"/>
        <end position="98"/>
    </location>
</feature>
<feature type="transmembrane region" description="Helical" evidence="2">
    <location>
        <begin position="113"/>
        <end position="133"/>
    </location>
</feature>
<feature type="transmembrane region" description="Helical" evidence="2">
    <location>
        <begin position="178"/>
        <end position="198"/>
    </location>
</feature>
<feature type="transmembrane region" description="Helical" evidence="2">
    <location>
        <begin position="226"/>
        <end position="246"/>
    </location>
</feature>
<feature type="transmembrane region" description="Helical" evidence="2">
    <location>
        <begin position="288"/>
        <end position="308"/>
    </location>
</feature>
<feature type="transmembrane region" description="Helical" evidence="2">
    <location>
        <begin position="320"/>
        <end position="340"/>
    </location>
</feature>
<feature type="transmembrane region" description="Helical" evidence="2">
    <location>
        <begin position="347"/>
        <end position="367"/>
    </location>
</feature>
<feature type="binding site" description="axial binding residue" evidence="2">
    <location>
        <position position="83"/>
    </location>
    <ligand>
        <name>heme b</name>
        <dbReference type="ChEBI" id="CHEBI:60344"/>
        <label>b562</label>
    </ligand>
    <ligandPart>
        <name>Fe</name>
        <dbReference type="ChEBI" id="CHEBI:18248"/>
    </ligandPart>
</feature>
<feature type="binding site" description="axial binding residue" evidence="2">
    <location>
        <position position="97"/>
    </location>
    <ligand>
        <name>heme b</name>
        <dbReference type="ChEBI" id="CHEBI:60344"/>
        <label>b566</label>
    </ligand>
    <ligandPart>
        <name>Fe</name>
        <dbReference type="ChEBI" id="CHEBI:18248"/>
    </ligandPart>
</feature>
<feature type="binding site" description="axial binding residue" evidence="2">
    <location>
        <position position="182"/>
    </location>
    <ligand>
        <name>heme b</name>
        <dbReference type="ChEBI" id="CHEBI:60344"/>
        <label>b562</label>
    </ligand>
    <ligandPart>
        <name>Fe</name>
        <dbReference type="ChEBI" id="CHEBI:18248"/>
    </ligandPart>
</feature>
<feature type="binding site" description="axial binding residue" evidence="2">
    <location>
        <position position="196"/>
    </location>
    <ligand>
        <name>heme b</name>
        <dbReference type="ChEBI" id="CHEBI:60344"/>
        <label>b566</label>
    </ligand>
    <ligandPart>
        <name>Fe</name>
        <dbReference type="ChEBI" id="CHEBI:18248"/>
    </ligandPart>
</feature>
<feature type="binding site" evidence="2">
    <location>
        <position position="201"/>
    </location>
    <ligand>
        <name>a ubiquinone</name>
        <dbReference type="ChEBI" id="CHEBI:16389"/>
    </ligand>
</feature>
<sequence length="379" mass="42545">MTNIRKTHPLAKIINNSFIDLPTPSNISAWWNFGSLLGICLILQILTGLFLAMHYTSDTTTAFSSVTHICRDVNYGWIIRYMHANGASMFFICLYMHVGRGLYYGSYTFTETWNIGIILLFTVMATAFMGYVLPWGQMSFWGATVITNLLSAIPYIGTDLVQWIWGGFSVDKATLTRFFAFHFILPFVVSALAAVHLLFLHETGSNNPSGIPSDSDKIPFHPYYTIKDILGALLLILTLMLLVLFSPDLLGDPDNYTPANPLSTPPHIKPEWYFLFAYAILRSIPNKLGGVLALALSILILAIIPLLHTSKQRGMMFRPISQCLFWLLVADLLTLTWIGGQPVEHPYITIGQLASILYFTILLVLMPITSIIENNILKW</sequence>
<dbReference type="EMBL" id="X72005">
    <property type="protein sequence ID" value="CAA50890.1"/>
    <property type="molecule type" value="Genomic_DNA"/>
</dbReference>
<dbReference type="EMBL" id="AM181025">
    <property type="protein sequence ID" value="CAJ57000.1"/>
    <property type="molecule type" value="Genomic_DNA"/>
</dbReference>
<dbReference type="EMBL" id="U12843">
    <property type="protein sequence ID" value="AAA67253.1"/>
    <property type="molecule type" value="Genomic_DNA"/>
</dbReference>
<dbReference type="PIR" id="S41833">
    <property type="entry name" value="S41833"/>
</dbReference>
<dbReference type="RefSeq" id="YP_778811.1">
    <property type="nucleotide sequence ID" value="NC_008424.1"/>
</dbReference>
<dbReference type="SMR" id="P38594"/>
<dbReference type="GeneID" id="4355831"/>
<dbReference type="KEGG" id="lww:4355831"/>
<dbReference type="CTD" id="4519"/>
<dbReference type="OrthoDB" id="244at2759"/>
<dbReference type="Proteomes" id="UP000245341">
    <property type="component" value="Mitochondrion MT"/>
</dbReference>
<dbReference type="GO" id="GO:0005743">
    <property type="term" value="C:mitochondrial inner membrane"/>
    <property type="evidence" value="ECO:0007669"/>
    <property type="project" value="UniProtKB-SubCell"/>
</dbReference>
<dbReference type="GO" id="GO:0045275">
    <property type="term" value="C:respiratory chain complex III"/>
    <property type="evidence" value="ECO:0007669"/>
    <property type="project" value="InterPro"/>
</dbReference>
<dbReference type="GO" id="GO:0046872">
    <property type="term" value="F:metal ion binding"/>
    <property type="evidence" value="ECO:0007669"/>
    <property type="project" value="UniProtKB-KW"/>
</dbReference>
<dbReference type="GO" id="GO:0008121">
    <property type="term" value="F:ubiquinol-cytochrome-c reductase activity"/>
    <property type="evidence" value="ECO:0007669"/>
    <property type="project" value="InterPro"/>
</dbReference>
<dbReference type="GO" id="GO:0006122">
    <property type="term" value="P:mitochondrial electron transport, ubiquinol to cytochrome c"/>
    <property type="evidence" value="ECO:0007669"/>
    <property type="project" value="TreeGrafter"/>
</dbReference>
<dbReference type="CDD" id="cd00290">
    <property type="entry name" value="cytochrome_b_C"/>
    <property type="match status" value="1"/>
</dbReference>
<dbReference type="CDD" id="cd00284">
    <property type="entry name" value="Cytochrome_b_N"/>
    <property type="match status" value="1"/>
</dbReference>
<dbReference type="FunFam" id="1.20.810.10:FF:000002">
    <property type="entry name" value="Cytochrome b"/>
    <property type="match status" value="1"/>
</dbReference>
<dbReference type="Gene3D" id="1.20.810.10">
    <property type="entry name" value="Cytochrome Bc1 Complex, Chain C"/>
    <property type="match status" value="1"/>
</dbReference>
<dbReference type="InterPro" id="IPR005798">
    <property type="entry name" value="Cyt_b/b6_C"/>
</dbReference>
<dbReference type="InterPro" id="IPR036150">
    <property type="entry name" value="Cyt_b/b6_C_sf"/>
</dbReference>
<dbReference type="InterPro" id="IPR005797">
    <property type="entry name" value="Cyt_b/b6_N"/>
</dbReference>
<dbReference type="InterPro" id="IPR027387">
    <property type="entry name" value="Cytb/b6-like_sf"/>
</dbReference>
<dbReference type="InterPro" id="IPR030689">
    <property type="entry name" value="Cytochrome_b"/>
</dbReference>
<dbReference type="InterPro" id="IPR048260">
    <property type="entry name" value="Cytochrome_b_C_euk/bac"/>
</dbReference>
<dbReference type="InterPro" id="IPR048259">
    <property type="entry name" value="Cytochrome_b_N_euk/bac"/>
</dbReference>
<dbReference type="InterPro" id="IPR016174">
    <property type="entry name" value="Di-haem_cyt_TM"/>
</dbReference>
<dbReference type="PANTHER" id="PTHR19271">
    <property type="entry name" value="CYTOCHROME B"/>
    <property type="match status" value="1"/>
</dbReference>
<dbReference type="PANTHER" id="PTHR19271:SF16">
    <property type="entry name" value="CYTOCHROME B"/>
    <property type="match status" value="1"/>
</dbReference>
<dbReference type="Pfam" id="PF00032">
    <property type="entry name" value="Cytochrom_B_C"/>
    <property type="match status" value="1"/>
</dbReference>
<dbReference type="Pfam" id="PF00033">
    <property type="entry name" value="Cytochrome_B"/>
    <property type="match status" value="1"/>
</dbReference>
<dbReference type="PIRSF" id="PIRSF038885">
    <property type="entry name" value="COB"/>
    <property type="match status" value="1"/>
</dbReference>
<dbReference type="SUPFAM" id="SSF81648">
    <property type="entry name" value="a domain/subunit of cytochrome bc1 complex (Ubiquinol-cytochrome c reductase)"/>
    <property type="match status" value="1"/>
</dbReference>
<dbReference type="SUPFAM" id="SSF81342">
    <property type="entry name" value="Transmembrane di-heme cytochromes"/>
    <property type="match status" value="1"/>
</dbReference>
<dbReference type="PROSITE" id="PS51003">
    <property type="entry name" value="CYTB_CTER"/>
    <property type="match status" value="1"/>
</dbReference>
<dbReference type="PROSITE" id="PS51002">
    <property type="entry name" value="CYTB_NTER"/>
    <property type="match status" value="1"/>
</dbReference>
<reference key="1">
    <citation type="journal article" date="1993" name="J. Mol. Evol.">
        <title>The nucleotide sequence of the mitochondrial DNA molecule of the grey seal, Halichoerus grypus, and a comparison with mitochondrial sequences of other true seals.</title>
        <authorList>
            <person name="Arnason U."/>
            <person name="Gullberg A."/>
            <person name="Johnsson E."/>
            <person name="Ledje C."/>
        </authorList>
    </citation>
    <scope>NUCLEOTIDE SEQUENCE [GENOMIC DNA]</scope>
</reference>
<reference key="2">
    <citation type="journal article" date="2006" name="Mol. Phylogenet. Evol.">
        <title>Pinniped phylogeny and a new hypothesis for their origin and dispersal.</title>
        <authorList>
            <person name="Arnason U."/>
            <person name="Gullberg A."/>
            <person name="Janke A."/>
            <person name="Kullberg M."/>
            <person name="Lehman N."/>
            <person name="Petrov E.A."/>
            <person name="Vainola R."/>
        </authorList>
    </citation>
    <scope>NUCLEOTIDE SEQUENCE [GENOMIC DNA]</scope>
</reference>
<reference key="3">
    <citation type="submission" date="1994-08" db="EMBL/GenBank/DDBJ databases">
        <authorList>
            <person name="Lento G.M."/>
            <person name="Hickson R.E."/>
            <person name="Chambers G.K."/>
            <person name="Penny D."/>
        </authorList>
    </citation>
    <scope>NUCLEOTIDE SEQUENCE [GENOMIC DNA] OF 1-125</scope>
</reference>